<keyword id="KW-0488">Methylation</keyword>
<keyword id="KW-0687">Ribonucleoprotein</keyword>
<keyword id="KW-0689">Ribosomal protein</keyword>
<keyword id="KW-0694">RNA-binding</keyword>
<keyword id="KW-0699">rRNA-binding</keyword>
<comment type="function">
    <text evidence="1">Forms part of the ribosomal stalk which helps the ribosome interact with GTP-bound translation factors.</text>
</comment>
<comment type="subunit">
    <text evidence="1">Part of the ribosomal stalk of the 50S ribosomal subunit. Interacts with L10 and the large rRNA to form the base of the stalk. L10 forms an elongated spine to which L12 dimers bind in a sequential fashion forming a multimeric L10(L12)X complex.</text>
</comment>
<comment type="PTM">
    <text evidence="1">One or more lysine residues are methylated.</text>
</comment>
<comment type="similarity">
    <text evidence="1">Belongs to the universal ribosomal protein uL11 family.</text>
</comment>
<sequence length="142" mass="15064">MAKKVAGQLKLQVKAGSANPSPPIGPALGQRGINIMEFCKAFNAATQEMEKGMPIPVVITYFQDKSFTFVMKQPPVSYFLKREAKVQSGSKTPGKAKAGAISKAQIRTIAEAKMKDLNAADIEGAMAMVEGSARSMGLEVTG</sequence>
<proteinExistence type="inferred from homology"/>
<protein>
    <recommendedName>
        <fullName evidence="1">Large ribosomal subunit protein uL11</fullName>
    </recommendedName>
    <alternativeName>
        <fullName evidence="2">50S ribosomal protein L11</fullName>
    </alternativeName>
</protein>
<dbReference type="EMBL" id="CP000738">
    <property type="protein sequence ID" value="ABR59827.1"/>
    <property type="molecule type" value="Genomic_DNA"/>
</dbReference>
<dbReference type="RefSeq" id="WP_011975162.1">
    <property type="nucleotide sequence ID" value="NC_009636.1"/>
</dbReference>
<dbReference type="RefSeq" id="YP_001326662.1">
    <property type="nucleotide sequence ID" value="NC_009636.1"/>
</dbReference>
<dbReference type="SMR" id="A6U847"/>
<dbReference type="STRING" id="366394.Smed_0974"/>
<dbReference type="GeneID" id="61614982"/>
<dbReference type="KEGG" id="smd:Smed_0974"/>
<dbReference type="PATRIC" id="fig|366394.8.peg.4093"/>
<dbReference type="eggNOG" id="COG0080">
    <property type="taxonomic scope" value="Bacteria"/>
</dbReference>
<dbReference type="HOGENOM" id="CLU_074237_2_0_5"/>
<dbReference type="OrthoDB" id="9802408at2"/>
<dbReference type="Proteomes" id="UP000001108">
    <property type="component" value="Chromosome"/>
</dbReference>
<dbReference type="GO" id="GO:0022625">
    <property type="term" value="C:cytosolic large ribosomal subunit"/>
    <property type="evidence" value="ECO:0007669"/>
    <property type="project" value="TreeGrafter"/>
</dbReference>
<dbReference type="GO" id="GO:0070180">
    <property type="term" value="F:large ribosomal subunit rRNA binding"/>
    <property type="evidence" value="ECO:0007669"/>
    <property type="project" value="UniProtKB-UniRule"/>
</dbReference>
<dbReference type="GO" id="GO:0003735">
    <property type="term" value="F:structural constituent of ribosome"/>
    <property type="evidence" value="ECO:0007669"/>
    <property type="project" value="InterPro"/>
</dbReference>
<dbReference type="GO" id="GO:0006412">
    <property type="term" value="P:translation"/>
    <property type="evidence" value="ECO:0007669"/>
    <property type="project" value="UniProtKB-UniRule"/>
</dbReference>
<dbReference type="CDD" id="cd00349">
    <property type="entry name" value="Ribosomal_L11"/>
    <property type="match status" value="1"/>
</dbReference>
<dbReference type="FunFam" id="1.10.10.250:FF:000001">
    <property type="entry name" value="50S ribosomal protein L11"/>
    <property type="match status" value="1"/>
</dbReference>
<dbReference type="FunFam" id="3.30.1550.10:FF:000001">
    <property type="entry name" value="50S ribosomal protein L11"/>
    <property type="match status" value="1"/>
</dbReference>
<dbReference type="Gene3D" id="1.10.10.250">
    <property type="entry name" value="Ribosomal protein L11, C-terminal domain"/>
    <property type="match status" value="1"/>
</dbReference>
<dbReference type="Gene3D" id="3.30.1550.10">
    <property type="entry name" value="Ribosomal protein L11/L12, N-terminal domain"/>
    <property type="match status" value="1"/>
</dbReference>
<dbReference type="HAMAP" id="MF_00736">
    <property type="entry name" value="Ribosomal_uL11"/>
    <property type="match status" value="1"/>
</dbReference>
<dbReference type="InterPro" id="IPR000911">
    <property type="entry name" value="Ribosomal_uL11"/>
</dbReference>
<dbReference type="InterPro" id="IPR006519">
    <property type="entry name" value="Ribosomal_uL11_bac-typ"/>
</dbReference>
<dbReference type="InterPro" id="IPR020783">
    <property type="entry name" value="Ribosomal_uL11_C"/>
</dbReference>
<dbReference type="InterPro" id="IPR036769">
    <property type="entry name" value="Ribosomal_uL11_C_sf"/>
</dbReference>
<dbReference type="InterPro" id="IPR020784">
    <property type="entry name" value="Ribosomal_uL11_N"/>
</dbReference>
<dbReference type="InterPro" id="IPR036796">
    <property type="entry name" value="Ribosomal_uL11_N_sf"/>
</dbReference>
<dbReference type="NCBIfam" id="TIGR01632">
    <property type="entry name" value="L11_bact"/>
    <property type="match status" value="1"/>
</dbReference>
<dbReference type="PANTHER" id="PTHR11661">
    <property type="entry name" value="60S RIBOSOMAL PROTEIN L12"/>
    <property type="match status" value="1"/>
</dbReference>
<dbReference type="PANTHER" id="PTHR11661:SF1">
    <property type="entry name" value="LARGE RIBOSOMAL SUBUNIT PROTEIN UL11M"/>
    <property type="match status" value="1"/>
</dbReference>
<dbReference type="Pfam" id="PF00298">
    <property type="entry name" value="Ribosomal_L11"/>
    <property type="match status" value="1"/>
</dbReference>
<dbReference type="Pfam" id="PF03946">
    <property type="entry name" value="Ribosomal_L11_N"/>
    <property type="match status" value="1"/>
</dbReference>
<dbReference type="SMART" id="SM00649">
    <property type="entry name" value="RL11"/>
    <property type="match status" value="1"/>
</dbReference>
<dbReference type="SUPFAM" id="SSF54747">
    <property type="entry name" value="Ribosomal L11/L12e N-terminal domain"/>
    <property type="match status" value="1"/>
</dbReference>
<dbReference type="SUPFAM" id="SSF46906">
    <property type="entry name" value="Ribosomal protein L11, C-terminal domain"/>
    <property type="match status" value="1"/>
</dbReference>
<gene>
    <name evidence="1" type="primary">rplK</name>
    <name type="ordered locus">Smed_0974</name>
</gene>
<reference key="1">
    <citation type="submission" date="2007-06" db="EMBL/GenBank/DDBJ databases">
        <title>Complete sequence of Sinorhizobium medicae WSM419 chromosome.</title>
        <authorList>
            <consortium name="US DOE Joint Genome Institute"/>
            <person name="Copeland A."/>
            <person name="Lucas S."/>
            <person name="Lapidus A."/>
            <person name="Barry K."/>
            <person name="Glavina del Rio T."/>
            <person name="Dalin E."/>
            <person name="Tice H."/>
            <person name="Pitluck S."/>
            <person name="Chain P."/>
            <person name="Malfatti S."/>
            <person name="Shin M."/>
            <person name="Vergez L."/>
            <person name="Schmutz J."/>
            <person name="Larimer F."/>
            <person name="Land M."/>
            <person name="Hauser L."/>
            <person name="Kyrpides N."/>
            <person name="Mikhailova N."/>
            <person name="Reeve W.G."/>
            <person name="Richardson P."/>
        </authorList>
    </citation>
    <scope>NUCLEOTIDE SEQUENCE [LARGE SCALE GENOMIC DNA]</scope>
    <source>
        <strain>WSM419</strain>
    </source>
</reference>
<evidence type="ECO:0000255" key="1">
    <source>
        <dbReference type="HAMAP-Rule" id="MF_00736"/>
    </source>
</evidence>
<evidence type="ECO:0000305" key="2"/>
<accession>A6U847</accession>
<feature type="chain" id="PRO_1000046270" description="Large ribosomal subunit protein uL11">
    <location>
        <begin position="1"/>
        <end position="142"/>
    </location>
</feature>
<organism>
    <name type="scientific">Sinorhizobium medicae (strain WSM419)</name>
    <name type="common">Ensifer medicae</name>
    <dbReference type="NCBI Taxonomy" id="366394"/>
    <lineage>
        <taxon>Bacteria</taxon>
        <taxon>Pseudomonadati</taxon>
        <taxon>Pseudomonadota</taxon>
        <taxon>Alphaproteobacteria</taxon>
        <taxon>Hyphomicrobiales</taxon>
        <taxon>Rhizobiaceae</taxon>
        <taxon>Sinorhizobium/Ensifer group</taxon>
        <taxon>Sinorhizobium</taxon>
    </lineage>
</organism>
<name>RL11_SINMW</name>